<organism>
    <name type="scientific">Antonospora locustae</name>
    <name type="common">Microsporidian parasite</name>
    <name type="synonym">Nosema locustae</name>
    <dbReference type="NCBI Taxonomy" id="278021"/>
    <lineage>
        <taxon>Eukaryota</taxon>
        <taxon>Fungi</taxon>
        <taxon>Fungi incertae sedis</taxon>
        <taxon>Microsporidia</taxon>
        <taxon>Antonospora</taxon>
    </lineage>
</organism>
<proteinExistence type="inferred from homology"/>
<accession>Q6E6J3</accession>
<dbReference type="EC" id="5.6.2.4" evidence="5"/>
<dbReference type="EMBL" id="AY548884">
    <property type="protein sequence ID" value="AAT12293.1"/>
    <property type="molecule type" value="Genomic_DNA"/>
</dbReference>
<dbReference type="SMR" id="Q6E6J3"/>
<dbReference type="GO" id="GO:0000112">
    <property type="term" value="C:nucleotide-excision repair factor 3 complex"/>
    <property type="evidence" value="ECO:0007669"/>
    <property type="project" value="TreeGrafter"/>
</dbReference>
<dbReference type="GO" id="GO:0005675">
    <property type="term" value="C:transcription factor TFIIH holo complex"/>
    <property type="evidence" value="ECO:0007669"/>
    <property type="project" value="TreeGrafter"/>
</dbReference>
<dbReference type="GO" id="GO:0097550">
    <property type="term" value="C:transcription preinitiation complex"/>
    <property type="evidence" value="ECO:0007669"/>
    <property type="project" value="TreeGrafter"/>
</dbReference>
<dbReference type="GO" id="GO:0043138">
    <property type="term" value="F:3'-5' DNA helicase activity"/>
    <property type="evidence" value="ECO:0007669"/>
    <property type="project" value="TreeGrafter"/>
</dbReference>
<dbReference type="GO" id="GO:0005524">
    <property type="term" value="F:ATP binding"/>
    <property type="evidence" value="ECO:0007669"/>
    <property type="project" value="UniProtKB-KW"/>
</dbReference>
<dbReference type="GO" id="GO:0016887">
    <property type="term" value="F:ATP hydrolysis activity"/>
    <property type="evidence" value="ECO:0007669"/>
    <property type="project" value="RHEA"/>
</dbReference>
<dbReference type="GO" id="GO:0003677">
    <property type="term" value="F:DNA binding"/>
    <property type="evidence" value="ECO:0007669"/>
    <property type="project" value="UniProtKB-KW"/>
</dbReference>
<dbReference type="GO" id="GO:0006289">
    <property type="term" value="P:nucleotide-excision repair"/>
    <property type="evidence" value="ECO:0007669"/>
    <property type="project" value="InterPro"/>
</dbReference>
<dbReference type="GO" id="GO:0006367">
    <property type="term" value="P:transcription initiation at RNA polymerase II promoter"/>
    <property type="evidence" value="ECO:0007669"/>
    <property type="project" value="InterPro"/>
</dbReference>
<dbReference type="CDD" id="cd18029">
    <property type="entry name" value="DEXHc_XPB"/>
    <property type="match status" value="1"/>
</dbReference>
<dbReference type="CDD" id="cd18789">
    <property type="entry name" value="SF2_C_XPB"/>
    <property type="match status" value="1"/>
</dbReference>
<dbReference type="FunFam" id="3.40.50.300:FF:000077">
    <property type="entry name" value="Probable DNA repair helicase RAD25"/>
    <property type="match status" value="1"/>
</dbReference>
<dbReference type="FunFam" id="3.40.50.300:FF:000117">
    <property type="entry name" value="Putative DNA repair helicase rad25"/>
    <property type="match status" value="1"/>
</dbReference>
<dbReference type="Gene3D" id="3.40.50.300">
    <property type="entry name" value="P-loop containing nucleotide triphosphate hydrolases"/>
    <property type="match status" value="2"/>
</dbReference>
<dbReference type="InterPro" id="IPR050615">
    <property type="entry name" value="ATP-dep_DNA_Helicase"/>
</dbReference>
<dbReference type="InterPro" id="IPR032438">
    <property type="entry name" value="ERCC3_RAD25_C"/>
</dbReference>
<dbReference type="InterPro" id="IPR006935">
    <property type="entry name" value="Helicase/UvrB_N"/>
</dbReference>
<dbReference type="InterPro" id="IPR014001">
    <property type="entry name" value="Helicase_ATP-bd"/>
</dbReference>
<dbReference type="InterPro" id="IPR001650">
    <property type="entry name" value="Helicase_C-like"/>
</dbReference>
<dbReference type="InterPro" id="IPR027417">
    <property type="entry name" value="P-loop_NTPase"/>
</dbReference>
<dbReference type="InterPro" id="IPR001161">
    <property type="entry name" value="XPB/Ssl2"/>
</dbReference>
<dbReference type="InterPro" id="IPR032830">
    <property type="entry name" value="XPB/Ssl2_N"/>
</dbReference>
<dbReference type="NCBIfam" id="TIGR00603">
    <property type="entry name" value="rad25"/>
    <property type="match status" value="1"/>
</dbReference>
<dbReference type="PANTHER" id="PTHR11274:SF0">
    <property type="entry name" value="GENERAL TRANSCRIPTION AND DNA REPAIR FACTOR IIH HELICASE SUBUNIT XPB"/>
    <property type="match status" value="1"/>
</dbReference>
<dbReference type="PANTHER" id="PTHR11274">
    <property type="entry name" value="RAD25/XP-B DNA REPAIR HELICASE"/>
    <property type="match status" value="1"/>
</dbReference>
<dbReference type="Pfam" id="PF16203">
    <property type="entry name" value="ERCC3_RAD25_C"/>
    <property type="match status" value="1"/>
</dbReference>
<dbReference type="Pfam" id="PF13625">
    <property type="entry name" value="Helicase_C_3"/>
    <property type="match status" value="1"/>
</dbReference>
<dbReference type="Pfam" id="PF04851">
    <property type="entry name" value="ResIII"/>
    <property type="match status" value="1"/>
</dbReference>
<dbReference type="PRINTS" id="PR00851">
    <property type="entry name" value="XRODRMPGMNTB"/>
</dbReference>
<dbReference type="SMART" id="SM00487">
    <property type="entry name" value="DEXDc"/>
    <property type="match status" value="1"/>
</dbReference>
<dbReference type="SMART" id="SM00490">
    <property type="entry name" value="HELICc"/>
    <property type="match status" value="1"/>
</dbReference>
<dbReference type="SUPFAM" id="SSF52540">
    <property type="entry name" value="P-loop containing nucleoside triphosphate hydrolases"/>
    <property type="match status" value="2"/>
</dbReference>
<dbReference type="PROSITE" id="PS51192">
    <property type="entry name" value="HELICASE_ATP_BIND_1"/>
    <property type="match status" value="1"/>
</dbReference>
<dbReference type="PROSITE" id="PS51194">
    <property type="entry name" value="HELICASE_CTER"/>
    <property type="match status" value="1"/>
</dbReference>
<keyword id="KW-0067">ATP-binding</keyword>
<keyword id="KW-0227">DNA damage</keyword>
<keyword id="KW-0234">DNA repair</keyword>
<keyword id="KW-0238">DNA-binding</keyword>
<keyword id="KW-0347">Helicase</keyword>
<keyword id="KW-0378">Hydrolase</keyword>
<keyword id="KW-0413">Isomerase</keyword>
<keyword id="KW-0547">Nucleotide-binding</keyword>
<keyword id="KW-0539">Nucleus</keyword>
<keyword id="KW-0804">Transcription</keyword>
<keyword id="KW-0805">Transcription regulation</keyword>
<name>RAD25_ANTLO</name>
<reference key="1">
    <citation type="journal article" date="2004" name="Curr. Biol.">
        <title>Genome compaction and stability in microsporidian intracellular parasites.</title>
        <authorList>
            <person name="Slamovits C.H."/>
            <person name="Fast N.M."/>
            <person name="Law J.S."/>
            <person name="Keeling P.J."/>
        </authorList>
    </citation>
    <scope>NUCLEOTIDE SEQUENCE [GENOMIC DNA]</scope>
</reference>
<gene>
    <name type="primary">SSL2</name>
    <name type="synonym">RAD25</name>
</gene>
<comment type="function">
    <text evidence="1">ATP-dependent 3'-5' DNA helicase/translocase; binds dsDNA rather than ssDNA, unzipping it in a translocase rather than classical helicase activity (By similarity). Component of the general transcription and DNA repair factor IIH (TFIIH) core complex. When complexed to CDK-activating kinase (CAK), involved in RNA transcription by RNA polymerase II. Also involved in transcription-coupled nucleotide excision repair (NER) of damaged DNA. In NER, TFIIH acts by opening DNA around the lesion to allow the excision of the damaged oligonucleotide and its replacement by a new DNA fragment. The ATPase activity of XPB/SSL2, but not its helicase activity, is required for DNA opening. In transcription, TFIIH has an essential role in transcription initiation. When the pre-initiation complex (PIC) has been established, TFIIH is required for promoter opening and promoter escape. The ATP-dependent helicase activity of XPB/SSL2 is required for promoter opening and promoter escape.</text>
</comment>
<comment type="catalytic activity">
    <reaction evidence="1">
        <text>Couples ATP hydrolysis with the unwinding of duplex DNA by translocating in the 3'-5' direction.</text>
        <dbReference type="EC" id="5.6.2.4"/>
    </reaction>
</comment>
<comment type="catalytic activity">
    <reaction evidence="1">
        <text>ATP + H2O = ADP + phosphate + H(+)</text>
        <dbReference type="Rhea" id="RHEA:13065"/>
        <dbReference type="ChEBI" id="CHEBI:15377"/>
        <dbReference type="ChEBI" id="CHEBI:15378"/>
        <dbReference type="ChEBI" id="CHEBI:30616"/>
        <dbReference type="ChEBI" id="CHEBI:43474"/>
        <dbReference type="ChEBI" id="CHEBI:456216"/>
        <dbReference type="EC" id="5.6.2.4"/>
    </reaction>
</comment>
<comment type="subunit">
    <text evidence="1">Component of the 7-subunit TFIIH core complex composed of XPB/SSL2, XPD/RAD3, SSL1, TFB1, TFB2, TFB4 and TFB5, which is active in NER. The core complex associates with the 3-subunit CTD-kinase module TFIIK composed of CCL1, KIN28 and TFB3 to form the 10-subunit holoenzyme (holo-TFIIH) active in transcription.</text>
</comment>
<comment type="subcellular location">
    <subcellularLocation>
        <location evidence="1">Nucleus</location>
    </subcellularLocation>
</comment>
<comment type="similarity">
    <text evidence="5">Belongs to the helicase family. RAD25/XPB subfamily.</text>
</comment>
<sequence>MTRCGWHTCTRVRPRMGETLLPRKASQHEFEPEEIRMKQEHTECPLLVSHNGIIILETFTANAKQATDFLIAIAEPVSRPAHVHEYRITPYSLYAAVSVGLTTEDILSTLDRFAKNTVPDTIVRFVRECTLSYGKTRLVFKGGRFLVEAATREVFDVLTGDAEISRLRAAGTVRDADARYVFEVRVDCIEQVRRRCIEIDYPMIEEYDFRDDVALRSLDMDLRDTVSIRTYQEVSLNKMFGNRRARSGVIVLPCGAGKTLVGITAMCTIKKPCIVLCTSGVSVEQWRQQVLAFSTVSADAVSRFTSERKEMFEADAGILITTYTMLAFSGRRSAEAQRVMEWLRGTEWGLMILDEVHVVPAAMFRKVVSAVSHHCKLGLTATLVREDDKIEDLNFLIGPKLYEADWQDLSMQGHIARVECVEVWCDMTAEFYREYLGQDPRRRRVLSIMNPAKFQTCEFLIRKHEALGEKIIVFSDNVLALRTYALKLGKPFIYGPTGQTERMRILRQFQTNPAINTLFLSKVGDTSIDLPEASCLIQISSHFGSRRQEAQRLGRILRAKRRNDPGFRVYFYTLVSKDTEEMYYSRKRQQFLVDQGYTFRTVTALEGFRDTDVRVFRGKAEQRELLATVLLASEEDLESEESEDGDEAAADRRHLRTRGGAEDTVPASRTRTERHLLFRKMHKRHRR</sequence>
<evidence type="ECO:0000250" key="1">
    <source>
        <dbReference type="UniProtKB" id="Q00578"/>
    </source>
</evidence>
<evidence type="ECO:0000255" key="2">
    <source>
        <dbReference type="PROSITE-ProRule" id="PRU00541"/>
    </source>
</evidence>
<evidence type="ECO:0000255" key="3">
    <source>
        <dbReference type="PROSITE-ProRule" id="PRU00542"/>
    </source>
</evidence>
<evidence type="ECO:0000256" key="4">
    <source>
        <dbReference type="SAM" id="MobiDB-lite"/>
    </source>
</evidence>
<evidence type="ECO:0000305" key="5"/>
<protein>
    <recommendedName>
        <fullName>General transcription and DNA repair factor IIH helicase/translocase subunit XPB</fullName>
        <shortName>TFIIH subunit XPB</shortName>
        <ecNumber evidence="5">5.6.2.4</ecNumber>
    </recommendedName>
    <alternativeName>
        <fullName evidence="5">DNA 3'-5' helicase/translocase XPB</fullName>
    </alternativeName>
    <alternativeName>
        <fullName>DNA repair helicase RAD25</fullName>
    </alternativeName>
    <alternativeName>
        <fullName>RNA polymerase II transcription factor B subunit SSL2</fullName>
        <shortName>TFB subunit SSL2</shortName>
    </alternativeName>
    <alternativeName>
        <fullName>Suppressor of stem-loop mutation 2</fullName>
    </alternativeName>
</protein>
<feature type="chain" id="PRO_0000388442" description="General transcription and DNA repair factor IIH helicase/translocase subunit XPB">
    <location>
        <begin position="1"/>
        <end position="687"/>
    </location>
</feature>
<feature type="domain" description="Helicase ATP-binding" evidence="2">
    <location>
        <begin position="239"/>
        <end position="401"/>
    </location>
</feature>
<feature type="domain" description="Helicase C-terminal" evidence="3">
    <location>
        <begin position="455"/>
        <end position="609"/>
    </location>
</feature>
<feature type="region of interest" description="Disordered" evidence="4">
    <location>
        <begin position="636"/>
        <end position="687"/>
    </location>
</feature>
<feature type="short sequence motif" description="DEAH box">
    <location>
        <begin position="354"/>
        <end position="357"/>
    </location>
</feature>
<feature type="compositionally biased region" description="Acidic residues" evidence="4">
    <location>
        <begin position="636"/>
        <end position="648"/>
    </location>
</feature>
<feature type="compositionally biased region" description="Basic residues" evidence="4">
    <location>
        <begin position="677"/>
        <end position="687"/>
    </location>
</feature>
<feature type="binding site" evidence="2">
    <location>
        <begin position="252"/>
        <end position="259"/>
    </location>
    <ligand>
        <name>ATP</name>
        <dbReference type="ChEBI" id="CHEBI:30616"/>
    </ligand>
</feature>